<protein>
    <recommendedName>
        <fullName evidence="1">7-methyl-GTP pyrophosphatase</fullName>
        <shortName evidence="1">m(7)GTP pyrophosphatase</shortName>
        <ecNumber evidence="1">3.6.1.-</ecNumber>
    </recommendedName>
</protein>
<sequence>MPAIPPKLILASSSRYRRELLSRLRLPFTAISPDVDETPQPGEAPADLALRLSVAKAMAVAATHPGSVVIGSDQVATVDGEPIGKPGGFERAREQLRRLSGRAVEFHSAMAVTDGVHTETADIVTLCRFRTLTDAAIDAYLRAEEPYDTAGSAKAESLGIALMDSIRSDDPTAIIGLPLIALTRMLGRFGLDPLTGHPA</sequence>
<dbReference type="EC" id="3.6.1.-" evidence="1"/>
<dbReference type="EMBL" id="BX640418">
    <property type="protein sequence ID" value="CAE42719.1"/>
    <property type="molecule type" value="Genomic_DNA"/>
</dbReference>
<dbReference type="RefSeq" id="NP_881075.1">
    <property type="nucleotide sequence ID" value="NC_002929.2"/>
</dbReference>
<dbReference type="RefSeq" id="WP_003821345.1">
    <property type="nucleotide sequence ID" value="NZ_CP039022.1"/>
</dbReference>
<dbReference type="SMR" id="Q7VW25"/>
<dbReference type="STRING" id="257313.BP2447"/>
<dbReference type="PaxDb" id="257313-BP2447"/>
<dbReference type="KEGG" id="bpe:BP2447"/>
<dbReference type="PATRIC" id="fig|257313.5.peg.2637"/>
<dbReference type="eggNOG" id="COG0424">
    <property type="taxonomic scope" value="Bacteria"/>
</dbReference>
<dbReference type="HOGENOM" id="CLU_040416_1_0_4"/>
<dbReference type="Proteomes" id="UP000002676">
    <property type="component" value="Chromosome"/>
</dbReference>
<dbReference type="GO" id="GO:0005737">
    <property type="term" value="C:cytoplasm"/>
    <property type="evidence" value="ECO:0007669"/>
    <property type="project" value="UniProtKB-SubCell"/>
</dbReference>
<dbReference type="GO" id="GO:0047429">
    <property type="term" value="F:nucleoside triphosphate diphosphatase activity"/>
    <property type="evidence" value="ECO:0007669"/>
    <property type="project" value="InterPro"/>
</dbReference>
<dbReference type="GO" id="GO:0009117">
    <property type="term" value="P:nucleotide metabolic process"/>
    <property type="evidence" value="ECO:0007669"/>
    <property type="project" value="UniProtKB-KW"/>
</dbReference>
<dbReference type="CDD" id="cd00555">
    <property type="entry name" value="Maf"/>
    <property type="match status" value="1"/>
</dbReference>
<dbReference type="Gene3D" id="3.90.950.10">
    <property type="match status" value="1"/>
</dbReference>
<dbReference type="HAMAP" id="MF_00528">
    <property type="entry name" value="Maf"/>
    <property type="match status" value="1"/>
</dbReference>
<dbReference type="InterPro" id="IPR029001">
    <property type="entry name" value="ITPase-like_fam"/>
</dbReference>
<dbReference type="InterPro" id="IPR003697">
    <property type="entry name" value="Maf-like"/>
</dbReference>
<dbReference type="NCBIfam" id="TIGR00172">
    <property type="entry name" value="maf"/>
    <property type="match status" value="1"/>
</dbReference>
<dbReference type="PANTHER" id="PTHR43213:SF10">
    <property type="entry name" value="7-METHYL-GTP PYROPHOSPHATASE"/>
    <property type="match status" value="1"/>
</dbReference>
<dbReference type="PANTHER" id="PTHR43213">
    <property type="entry name" value="BIFUNCTIONAL DTTP/UTP PYROPHOSPHATASE/METHYLTRANSFERASE PROTEIN-RELATED"/>
    <property type="match status" value="1"/>
</dbReference>
<dbReference type="Pfam" id="PF02545">
    <property type="entry name" value="Maf"/>
    <property type="match status" value="1"/>
</dbReference>
<dbReference type="PIRSF" id="PIRSF006305">
    <property type="entry name" value="Maf"/>
    <property type="match status" value="1"/>
</dbReference>
<dbReference type="SUPFAM" id="SSF52972">
    <property type="entry name" value="ITPase-like"/>
    <property type="match status" value="1"/>
</dbReference>
<proteinExistence type="inferred from homology"/>
<evidence type="ECO:0000255" key="1">
    <source>
        <dbReference type="HAMAP-Rule" id="MF_00528"/>
    </source>
</evidence>
<gene>
    <name type="ordered locus">BP2447</name>
</gene>
<accession>Q7VW25</accession>
<reference key="1">
    <citation type="journal article" date="2003" name="Nat. Genet.">
        <title>Comparative analysis of the genome sequences of Bordetella pertussis, Bordetella parapertussis and Bordetella bronchiseptica.</title>
        <authorList>
            <person name="Parkhill J."/>
            <person name="Sebaihia M."/>
            <person name="Preston A."/>
            <person name="Murphy L.D."/>
            <person name="Thomson N.R."/>
            <person name="Harris D.E."/>
            <person name="Holden M.T.G."/>
            <person name="Churcher C.M."/>
            <person name="Bentley S.D."/>
            <person name="Mungall K.L."/>
            <person name="Cerdeno-Tarraga A.-M."/>
            <person name="Temple L."/>
            <person name="James K.D."/>
            <person name="Harris B."/>
            <person name="Quail M.A."/>
            <person name="Achtman M."/>
            <person name="Atkin R."/>
            <person name="Baker S."/>
            <person name="Basham D."/>
            <person name="Bason N."/>
            <person name="Cherevach I."/>
            <person name="Chillingworth T."/>
            <person name="Collins M."/>
            <person name="Cronin A."/>
            <person name="Davis P."/>
            <person name="Doggett J."/>
            <person name="Feltwell T."/>
            <person name="Goble A."/>
            <person name="Hamlin N."/>
            <person name="Hauser H."/>
            <person name="Holroyd S."/>
            <person name="Jagels K."/>
            <person name="Leather S."/>
            <person name="Moule S."/>
            <person name="Norberczak H."/>
            <person name="O'Neil S."/>
            <person name="Ormond D."/>
            <person name="Price C."/>
            <person name="Rabbinowitsch E."/>
            <person name="Rutter S."/>
            <person name="Sanders M."/>
            <person name="Saunders D."/>
            <person name="Seeger K."/>
            <person name="Sharp S."/>
            <person name="Simmonds M."/>
            <person name="Skelton J."/>
            <person name="Squares R."/>
            <person name="Squares S."/>
            <person name="Stevens K."/>
            <person name="Unwin L."/>
            <person name="Whitehead S."/>
            <person name="Barrell B.G."/>
            <person name="Maskell D.J."/>
        </authorList>
    </citation>
    <scope>NUCLEOTIDE SEQUENCE [LARGE SCALE GENOMIC DNA]</scope>
    <source>
        <strain>Tohama I / ATCC BAA-589 / NCTC 13251</strain>
    </source>
</reference>
<feature type="chain" id="PRO_0000122996" description="7-methyl-GTP pyrophosphatase">
    <location>
        <begin position="1"/>
        <end position="199"/>
    </location>
</feature>
<feature type="active site" description="Proton acceptor" evidence="1">
    <location>
        <position position="73"/>
    </location>
</feature>
<feature type="site" description="Important for substrate specificity" evidence="1">
    <location>
        <position position="16"/>
    </location>
</feature>
<feature type="site" description="Important for substrate specificity" evidence="1">
    <location>
        <position position="74"/>
    </location>
</feature>
<feature type="site" description="Important for substrate specificity" evidence="1">
    <location>
        <position position="156"/>
    </location>
</feature>
<name>NTPPB_BORPE</name>
<organism>
    <name type="scientific">Bordetella pertussis (strain Tohama I / ATCC BAA-589 / NCTC 13251)</name>
    <dbReference type="NCBI Taxonomy" id="257313"/>
    <lineage>
        <taxon>Bacteria</taxon>
        <taxon>Pseudomonadati</taxon>
        <taxon>Pseudomonadota</taxon>
        <taxon>Betaproteobacteria</taxon>
        <taxon>Burkholderiales</taxon>
        <taxon>Alcaligenaceae</taxon>
        <taxon>Bordetella</taxon>
    </lineage>
</organism>
<comment type="function">
    <text evidence="1">Nucleoside triphosphate pyrophosphatase that hydrolyzes 7-methyl-GTP (m(7)GTP). May have a dual role in cell division arrest and in preventing the incorporation of modified nucleotides into cellular nucleic acids.</text>
</comment>
<comment type="catalytic activity">
    <reaction evidence="1">
        <text>N(7)-methyl-GTP + H2O = N(7)-methyl-GMP + diphosphate + H(+)</text>
        <dbReference type="Rhea" id="RHEA:58744"/>
        <dbReference type="ChEBI" id="CHEBI:15377"/>
        <dbReference type="ChEBI" id="CHEBI:15378"/>
        <dbReference type="ChEBI" id="CHEBI:33019"/>
        <dbReference type="ChEBI" id="CHEBI:58285"/>
        <dbReference type="ChEBI" id="CHEBI:87133"/>
    </reaction>
</comment>
<comment type="cofactor">
    <cofactor evidence="1">
        <name>a divalent metal cation</name>
        <dbReference type="ChEBI" id="CHEBI:60240"/>
    </cofactor>
</comment>
<comment type="subcellular location">
    <subcellularLocation>
        <location evidence="1">Cytoplasm</location>
    </subcellularLocation>
</comment>
<comment type="similarity">
    <text evidence="1">Belongs to the Maf family. YceF subfamily.</text>
</comment>
<keyword id="KW-0963">Cytoplasm</keyword>
<keyword id="KW-0378">Hydrolase</keyword>
<keyword id="KW-0546">Nucleotide metabolism</keyword>
<keyword id="KW-1185">Reference proteome</keyword>